<keyword id="KW-0067">ATP-binding</keyword>
<keyword id="KW-0997">Cell inner membrane</keyword>
<keyword id="KW-1003">Cell membrane</keyword>
<keyword id="KW-0472">Membrane</keyword>
<keyword id="KW-0547">Nucleotide-binding</keyword>
<keyword id="KW-1278">Translocase</keyword>
<keyword id="KW-0813">Transport</keyword>
<name>HMUV_PSEE4</name>
<feature type="chain" id="PRO_0000277704" description="Hemin import ATP-binding protein HmuV">
    <location>
        <begin position="1"/>
        <end position="255"/>
    </location>
</feature>
<feature type="domain" description="ABC transporter" evidence="1">
    <location>
        <begin position="2"/>
        <end position="238"/>
    </location>
</feature>
<feature type="binding site" evidence="1">
    <location>
        <begin position="34"/>
        <end position="41"/>
    </location>
    <ligand>
        <name>ATP</name>
        <dbReference type="ChEBI" id="CHEBI:30616"/>
    </ligand>
</feature>
<protein>
    <recommendedName>
        <fullName evidence="1">Hemin import ATP-binding protein HmuV</fullName>
        <ecNumber evidence="1">7.6.2.-</ecNumber>
    </recommendedName>
</protein>
<dbReference type="EC" id="7.6.2.-" evidence="1"/>
<dbReference type="EMBL" id="CT573326">
    <property type="protein sequence ID" value="CAK17381.1"/>
    <property type="molecule type" value="Genomic_DNA"/>
</dbReference>
<dbReference type="RefSeq" id="WP_011535744.1">
    <property type="nucleotide sequence ID" value="NC_008027.1"/>
</dbReference>
<dbReference type="SMR" id="Q1I4Q5"/>
<dbReference type="STRING" id="384676.PSEEN4720"/>
<dbReference type="GeneID" id="32807687"/>
<dbReference type="KEGG" id="pen:PSEEN4720"/>
<dbReference type="eggNOG" id="COG4559">
    <property type="taxonomic scope" value="Bacteria"/>
</dbReference>
<dbReference type="HOGENOM" id="CLU_000604_1_11_6"/>
<dbReference type="OrthoDB" id="5292475at2"/>
<dbReference type="Proteomes" id="UP000000658">
    <property type="component" value="Chromosome"/>
</dbReference>
<dbReference type="GO" id="GO:0005886">
    <property type="term" value="C:plasma membrane"/>
    <property type="evidence" value="ECO:0007669"/>
    <property type="project" value="UniProtKB-SubCell"/>
</dbReference>
<dbReference type="GO" id="GO:0005524">
    <property type="term" value="F:ATP binding"/>
    <property type="evidence" value="ECO:0007669"/>
    <property type="project" value="UniProtKB-KW"/>
</dbReference>
<dbReference type="GO" id="GO:0016887">
    <property type="term" value="F:ATP hydrolysis activity"/>
    <property type="evidence" value="ECO:0007669"/>
    <property type="project" value="InterPro"/>
</dbReference>
<dbReference type="CDD" id="cd03214">
    <property type="entry name" value="ABC_Iron-Siderophores_B12_Hemin"/>
    <property type="match status" value="1"/>
</dbReference>
<dbReference type="Gene3D" id="3.40.50.300">
    <property type="entry name" value="P-loop containing nucleotide triphosphate hydrolases"/>
    <property type="match status" value="1"/>
</dbReference>
<dbReference type="InterPro" id="IPR003593">
    <property type="entry name" value="AAA+_ATPase"/>
</dbReference>
<dbReference type="InterPro" id="IPR003439">
    <property type="entry name" value="ABC_transporter-like_ATP-bd"/>
</dbReference>
<dbReference type="InterPro" id="IPR027417">
    <property type="entry name" value="P-loop_NTPase"/>
</dbReference>
<dbReference type="NCBIfam" id="NF010068">
    <property type="entry name" value="PRK13548.1"/>
    <property type="match status" value="1"/>
</dbReference>
<dbReference type="PANTHER" id="PTHR42794">
    <property type="entry name" value="HEMIN IMPORT ATP-BINDING PROTEIN HMUV"/>
    <property type="match status" value="1"/>
</dbReference>
<dbReference type="PANTHER" id="PTHR42794:SF1">
    <property type="entry name" value="HEMIN IMPORT ATP-BINDING PROTEIN HMUV"/>
    <property type="match status" value="1"/>
</dbReference>
<dbReference type="Pfam" id="PF00005">
    <property type="entry name" value="ABC_tran"/>
    <property type="match status" value="1"/>
</dbReference>
<dbReference type="SMART" id="SM00382">
    <property type="entry name" value="AAA"/>
    <property type="match status" value="1"/>
</dbReference>
<dbReference type="SUPFAM" id="SSF52540">
    <property type="entry name" value="P-loop containing nucleoside triphosphate hydrolases"/>
    <property type="match status" value="1"/>
</dbReference>
<dbReference type="PROSITE" id="PS50893">
    <property type="entry name" value="ABC_TRANSPORTER_2"/>
    <property type="match status" value="1"/>
</dbReference>
<dbReference type="PROSITE" id="PS51261">
    <property type="entry name" value="HMUV"/>
    <property type="match status" value="1"/>
</dbReference>
<comment type="function">
    <text evidence="1">Part of the ABC transporter complex HmuTUV involved in hemin import. Responsible for energy coupling to the transport system.</text>
</comment>
<comment type="subunit">
    <text evidence="1">The complex is composed of two ATP-binding proteins (HmuV), two transmembrane proteins (HmuU) and a solute-binding protein (HmuT).</text>
</comment>
<comment type="subcellular location">
    <subcellularLocation>
        <location evidence="1">Cell inner membrane</location>
        <topology evidence="1">Peripheral membrane protein</topology>
    </subcellularLocation>
</comment>
<comment type="similarity">
    <text evidence="1">Belongs to the ABC transporter superfamily. Heme (hemin) importer (TC 3.A.1.14.5) family.</text>
</comment>
<organism>
    <name type="scientific">Pseudomonas entomophila (strain L48)</name>
    <dbReference type="NCBI Taxonomy" id="384676"/>
    <lineage>
        <taxon>Bacteria</taxon>
        <taxon>Pseudomonadati</taxon>
        <taxon>Pseudomonadota</taxon>
        <taxon>Gammaproteobacteria</taxon>
        <taxon>Pseudomonadales</taxon>
        <taxon>Pseudomonadaceae</taxon>
        <taxon>Pseudomonas</taxon>
    </lineage>
</organism>
<sequence length="255" mass="27276">MLDVEGLHLKRGSSEVLSDIRLQLRPGQILGVLGPNGAGKSSLLGALCGELSPSAGQVRLDGRDLHAWPGQERARRLAVLPQASSLGFAFSVEEVVGLGRLPHASGRQRDREIVEAALAAADAGHLASRSYLALSGGERQRVHLARVLAQLWPGEAGTTLLLDEPTSALDPLHQHTTLQAVRSFADRGAAVLVILHDLNLAARYCDHILLLEHGRSHALDTPQRVLTPAALNAVFGIDVLVQPHPERGHPLIITR</sequence>
<proteinExistence type="inferred from homology"/>
<accession>Q1I4Q5</accession>
<evidence type="ECO:0000255" key="1">
    <source>
        <dbReference type="HAMAP-Rule" id="MF_01718"/>
    </source>
</evidence>
<gene>
    <name evidence="1" type="primary">hmuV</name>
    <name type="ordered locus">PSEEN4720</name>
</gene>
<reference key="1">
    <citation type="journal article" date="2006" name="Nat. Biotechnol.">
        <title>Complete genome sequence of the entomopathogenic and metabolically versatile soil bacterium Pseudomonas entomophila.</title>
        <authorList>
            <person name="Vodovar N."/>
            <person name="Vallenet D."/>
            <person name="Cruveiller S."/>
            <person name="Rouy Z."/>
            <person name="Barbe V."/>
            <person name="Acosta C."/>
            <person name="Cattolico L."/>
            <person name="Jubin C."/>
            <person name="Lajus A."/>
            <person name="Segurens B."/>
            <person name="Vacherie B."/>
            <person name="Wincker P."/>
            <person name="Weissenbach J."/>
            <person name="Lemaitre B."/>
            <person name="Medigue C."/>
            <person name="Boccard F."/>
        </authorList>
    </citation>
    <scope>NUCLEOTIDE SEQUENCE [LARGE SCALE GENOMIC DNA]</scope>
    <source>
        <strain>L48</strain>
    </source>
</reference>